<protein>
    <recommendedName>
        <fullName evidence="1">1-deoxy-D-xylulose 5-phosphate reductoisomerase</fullName>
        <shortName evidence="1">DXP reductoisomerase</shortName>
        <ecNumber evidence="1">1.1.1.267</ecNumber>
    </recommendedName>
    <alternativeName>
        <fullName evidence="1">1-deoxyxylulose-5-phosphate reductoisomerase</fullName>
    </alternativeName>
    <alternativeName>
        <fullName evidence="1">2-C-methyl-D-erythritol 4-phosphate synthase</fullName>
    </alternativeName>
</protein>
<name>DXR_ARTS2</name>
<accession>A0JUS3</accession>
<evidence type="ECO:0000255" key="1">
    <source>
        <dbReference type="HAMAP-Rule" id="MF_00183"/>
    </source>
</evidence>
<comment type="function">
    <text evidence="1">Catalyzes the NADPH-dependent rearrangement and reduction of 1-deoxy-D-xylulose-5-phosphate (DXP) to 2-C-methyl-D-erythritol 4-phosphate (MEP).</text>
</comment>
<comment type="catalytic activity">
    <reaction evidence="1">
        <text>2-C-methyl-D-erythritol 4-phosphate + NADP(+) = 1-deoxy-D-xylulose 5-phosphate + NADPH + H(+)</text>
        <dbReference type="Rhea" id="RHEA:13717"/>
        <dbReference type="ChEBI" id="CHEBI:15378"/>
        <dbReference type="ChEBI" id="CHEBI:57783"/>
        <dbReference type="ChEBI" id="CHEBI:57792"/>
        <dbReference type="ChEBI" id="CHEBI:58262"/>
        <dbReference type="ChEBI" id="CHEBI:58349"/>
        <dbReference type="EC" id="1.1.1.267"/>
    </reaction>
    <physiologicalReaction direction="right-to-left" evidence="1">
        <dbReference type="Rhea" id="RHEA:13719"/>
    </physiologicalReaction>
</comment>
<comment type="cofactor">
    <cofactor evidence="1">
        <name>Mg(2+)</name>
        <dbReference type="ChEBI" id="CHEBI:18420"/>
    </cofactor>
    <cofactor evidence="1">
        <name>Mn(2+)</name>
        <dbReference type="ChEBI" id="CHEBI:29035"/>
    </cofactor>
</comment>
<comment type="pathway">
    <text evidence="1">Isoprenoid biosynthesis; isopentenyl diphosphate biosynthesis via DXP pathway; isopentenyl diphosphate from 1-deoxy-D-xylulose 5-phosphate: step 1/6.</text>
</comment>
<comment type="similarity">
    <text evidence="1">Belongs to the DXR family.</text>
</comment>
<feature type="chain" id="PRO_1000020215" description="1-deoxy-D-xylulose 5-phosphate reductoisomerase">
    <location>
        <begin position="1"/>
        <end position="394"/>
    </location>
</feature>
<feature type="binding site" evidence="1">
    <location>
        <position position="12"/>
    </location>
    <ligand>
        <name>NADPH</name>
        <dbReference type="ChEBI" id="CHEBI:57783"/>
    </ligand>
</feature>
<feature type="binding site" evidence="1">
    <location>
        <position position="13"/>
    </location>
    <ligand>
        <name>NADPH</name>
        <dbReference type="ChEBI" id="CHEBI:57783"/>
    </ligand>
</feature>
<feature type="binding site" evidence="1">
    <location>
        <position position="14"/>
    </location>
    <ligand>
        <name>NADPH</name>
        <dbReference type="ChEBI" id="CHEBI:57783"/>
    </ligand>
</feature>
<feature type="binding site" evidence="1">
    <location>
        <position position="15"/>
    </location>
    <ligand>
        <name>NADPH</name>
        <dbReference type="ChEBI" id="CHEBI:57783"/>
    </ligand>
</feature>
<feature type="binding site" evidence="1">
    <location>
        <position position="38"/>
    </location>
    <ligand>
        <name>NADPH</name>
        <dbReference type="ChEBI" id="CHEBI:57783"/>
    </ligand>
</feature>
<feature type="binding site" evidence="1">
    <location>
        <position position="41"/>
    </location>
    <ligand>
        <name>NADPH</name>
        <dbReference type="ChEBI" id="CHEBI:57783"/>
    </ligand>
</feature>
<feature type="binding site" evidence="1">
    <location>
        <position position="132"/>
    </location>
    <ligand>
        <name>NADPH</name>
        <dbReference type="ChEBI" id="CHEBI:57783"/>
    </ligand>
</feature>
<feature type="binding site" evidence="1">
    <location>
        <position position="133"/>
    </location>
    <ligand>
        <name>1-deoxy-D-xylulose 5-phosphate</name>
        <dbReference type="ChEBI" id="CHEBI:57792"/>
    </ligand>
</feature>
<feature type="binding site" evidence="1">
    <location>
        <position position="134"/>
    </location>
    <ligand>
        <name>NADPH</name>
        <dbReference type="ChEBI" id="CHEBI:57783"/>
    </ligand>
</feature>
<feature type="binding site" evidence="1">
    <location>
        <position position="156"/>
    </location>
    <ligand>
        <name>Mn(2+)</name>
        <dbReference type="ChEBI" id="CHEBI:29035"/>
    </ligand>
</feature>
<feature type="binding site" evidence="1">
    <location>
        <position position="157"/>
    </location>
    <ligand>
        <name>1-deoxy-D-xylulose 5-phosphate</name>
        <dbReference type="ChEBI" id="CHEBI:57792"/>
    </ligand>
</feature>
<feature type="binding site" evidence="1">
    <location>
        <position position="158"/>
    </location>
    <ligand>
        <name>1-deoxy-D-xylulose 5-phosphate</name>
        <dbReference type="ChEBI" id="CHEBI:57792"/>
    </ligand>
</feature>
<feature type="binding site" evidence="1">
    <location>
        <position position="158"/>
    </location>
    <ligand>
        <name>Mn(2+)</name>
        <dbReference type="ChEBI" id="CHEBI:29035"/>
    </ligand>
</feature>
<feature type="binding site" evidence="1">
    <location>
        <position position="182"/>
    </location>
    <ligand>
        <name>1-deoxy-D-xylulose 5-phosphate</name>
        <dbReference type="ChEBI" id="CHEBI:57792"/>
    </ligand>
</feature>
<feature type="binding site" evidence="1">
    <location>
        <position position="205"/>
    </location>
    <ligand>
        <name>1-deoxy-D-xylulose 5-phosphate</name>
        <dbReference type="ChEBI" id="CHEBI:57792"/>
    </ligand>
</feature>
<feature type="binding site" evidence="1">
    <location>
        <position position="211"/>
    </location>
    <ligand>
        <name>NADPH</name>
        <dbReference type="ChEBI" id="CHEBI:57783"/>
    </ligand>
</feature>
<feature type="binding site" evidence="1">
    <location>
        <position position="218"/>
    </location>
    <ligand>
        <name>1-deoxy-D-xylulose 5-phosphate</name>
        <dbReference type="ChEBI" id="CHEBI:57792"/>
    </ligand>
</feature>
<feature type="binding site" evidence="1">
    <location>
        <position position="223"/>
    </location>
    <ligand>
        <name>1-deoxy-D-xylulose 5-phosphate</name>
        <dbReference type="ChEBI" id="CHEBI:57792"/>
    </ligand>
</feature>
<feature type="binding site" evidence="1">
    <location>
        <position position="224"/>
    </location>
    <ligand>
        <name>1-deoxy-D-xylulose 5-phosphate</name>
        <dbReference type="ChEBI" id="CHEBI:57792"/>
    </ligand>
</feature>
<feature type="binding site" evidence="1">
    <location>
        <position position="227"/>
    </location>
    <ligand>
        <name>1-deoxy-D-xylulose 5-phosphate</name>
        <dbReference type="ChEBI" id="CHEBI:57792"/>
    </ligand>
</feature>
<feature type="binding site" evidence="1">
    <location>
        <position position="227"/>
    </location>
    <ligand>
        <name>Mn(2+)</name>
        <dbReference type="ChEBI" id="CHEBI:29035"/>
    </ligand>
</feature>
<proteinExistence type="inferred from homology"/>
<gene>
    <name evidence="1" type="primary">dxr</name>
    <name type="ordered locus">Arth_1399</name>
</gene>
<dbReference type="EC" id="1.1.1.267" evidence="1"/>
<dbReference type="EMBL" id="CP000454">
    <property type="protein sequence ID" value="ABK02793.1"/>
    <property type="molecule type" value="Genomic_DNA"/>
</dbReference>
<dbReference type="RefSeq" id="WP_011691260.1">
    <property type="nucleotide sequence ID" value="NC_008541.1"/>
</dbReference>
<dbReference type="SMR" id="A0JUS3"/>
<dbReference type="STRING" id="290399.Arth_1399"/>
<dbReference type="KEGG" id="art:Arth_1399"/>
<dbReference type="eggNOG" id="COG0743">
    <property type="taxonomic scope" value="Bacteria"/>
</dbReference>
<dbReference type="HOGENOM" id="CLU_035714_4_0_11"/>
<dbReference type="OrthoDB" id="9806546at2"/>
<dbReference type="UniPathway" id="UPA00056">
    <property type="reaction ID" value="UER00092"/>
</dbReference>
<dbReference type="Proteomes" id="UP000000754">
    <property type="component" value="Chromosome"/>
</dbReference>
<dbReference type="GO" id="GO:0030604">
    <property type="term" value="F:1-deoxy-D-xylulose-5-phosphate reductoisomerase activity"/>
    <property type="evidence" value="ECO:0007669"/>
    <property type="project" value="UniProtKB-UniRule"/>
</dbReference>
<dbReference type="GO" id="GO:0030145">
    <property type="term" value="F:manganese ion binding"/>
    <property type="evidence" value="ECO:0007669"/>
    <property type="project" value="TreeGrafter"/>
</dbReference>
<dbReference type="GO" id="GO:0070402">
    <property type="term" value="F:NADPH binding"/>
    <property type="evidence" value="ECO:0007669"/>
    <property type="project" value="InterPro"/>
</dbReference>
<dbReference type="GO" id="GO:0051484">
    <property type="term" value="P:isopentenyl diphosphate biosynthetic process, methylerythritol 4-phosphate pathway involved in terpenoid biosynthetic process"/>
    <property type="evidence" value="ECO:0007669"/>
    <property type="project" value="TreeGrafter"/>
</dbReference>
<dbReference type="FunFam" id="3.40.50.720:FF:000045">
    <property type="entry name" value="1-deoxy-D-xylulose 5-phosphate reductoisomerase"/>
    <property type="match status" value="1"/>
</dbReference>
<dbReference type="Gene3D" id="1.10.1740.10">
    <property type="match status" value="1"/>
</dbReference>
<dbReference type="Gene3D" id="3.40.50.720">
    <property type="entry name" value="NAD(P)-binding Rossmann-like Domain"/>
    <property type="match status" value="1"/>
</dbReference>
<dbReference type="HAMAP" id="MF_00183">
    <property type="entry name" value="DXP_reductoisom"/>
    <property type="match status" value="1"/>
</dbReference>
<dbReference type="InterPro" id="IPR003821">
    <property type="entry name" value="DXP_reductoisomerase"/>
</dbReference>
<dbReference type="InterPro" id="IPR013644">
    <property type="entry name" value="DXP_reductoisomerase_C"/>
</dbReference>
<dbReference type="InterPro" id="IPR013512">
    <property type="entry name" value="DXP_reductoisomerase_N"/>
</dbReference>
<dbReference type="InterPro" id="IPR026877">
    <property type="entry name" value="DXPR_C"/>
</dbReference>
<dbReference type="InterPro" id="IPR036169">
    <property type="entry name" value="DXPR_C_sf"/>
</dbReference>
<dbReference type="InterPro" id="IPR036291">
    <property type="entry name" value="NAD(P)-bd_dom_sf"/>
</dbReference>
<dbReference type="NCBIfam" id="TIGR00243">
    <property type="entry name" value="Dxr"/>
    <property type="match status" value="1"/>
</dbReference>
<dbReference type="PANTHER" id="PTHR30525">
    <property type="entry name" value="1-DEOXY-D-XYLULOSE 5-PHOSPHATE REDUCTOISOMERASE"/>
    <property type="match status" value="1"/>
</dbReference>
<dbReference type="PANTHER" id="PTHR30525:SF0">
    <property type="entry name" value="1-DEOXY-D-XYLULOSE 5-PHOSPHATE REDUCTOISOMERASE, CHLOROPLASTIC"/>
    <property type="match status" value="1"/>
</dbReference>
<dbReference type="Pfam" id="PF08436">
    <property type="entry name" value="DXP_redisom_C"/>
    <property type="match status" value="1"/>
</dbReference>
<dbReference type="Pfam" id="PF02670">
    <property type="entry name" value="DXP_reductoisom"/>
    <property type="match status" value="1"/>
</dbReference>
<dbReference type="Pfam" id="PF13288">
    <property type="entry name" value="DXPR_C"/>
    <property type="match status" value="1"/>
</dbReference>
<dbReference type="PIRSF" id="PIRSF006205">
    <property type="entry name" value="Dxp_reductismrs"/>
    <property type="match status" value="1"/>
</dbReference>
<dbReference type="SUPFAM" id="SSF69055">
    <property type="entry name" value="1-deoxy-D-xylulose-5-phosphate reductoisomerase, C-terminal domain"/>
    <property type="match status" value="1"/>
</dbReference>
<dbReference type="SUPFAM" id="SSF55347">
    <property type="entry name" value="Glyceraldehyde-3-phosphate dehydrogenase-like, C-terminal domain"/>
    <property type="match status" value="1"/>
</dbReference>
<dbReference type="SUPFAM" id="SSF51735">
    <property type="entry name" value="NAD(P)-binding Rossmann-fold domains"/>
    <property type="match status" value="1"/>
</dbReference>
<organism>
    <name type="scientific">Arthrobacter sp. (strain FB24)</name>
    <dbReference type="NCBI Taxonomy" id="290399"/>
    <lineage>
        <taxon>Bacteria</taxon>
        <taxon>Bacillati</taxon>
        <taxon>Actinomycetota</taxon>
        <taxon>Actinomycetes</taxon>
        <taxon>Micrococcales</taxon>
        <taxon>Micrococcaceae</taxon>
        <taxon>Arthrobacter</taxon>
    </lineage>
</organism>
<sequence>MQPRRIVLLGSTGSIGTQAIDVVDGAPHLFEVVALSAGGGNLELLARQAVHTKAKAVGTASGDATALQRLIDDAARATGVAGYRPEIITGPDASTRIAEIEADVVLNGITGSIGLAPTLAALKSGATLALANKESLIVGGALVKAAAREGQIVPVDSEHSAIAQCLRSGTAAEVDRLILTASGGPFRGRTREELHNVSPEEALAHPTWDMGLMVTTNSASLVNKGLEVIEAHLLFDIPLDRIDVVVHPQSVVHSMVQFVDGSIIAQASPPDMRLPIALGLGWPDRVPKAATPCDWTQATSWTFEPLDAEAFPAVNLAKDAAKQGSTYPAVFNAANEEAVMAFHAGRIRFTDIVDTIEAVLSEHPGSSGLTVESVLDAEAWARARTHERLAVSSL</sequence>
<reference key="1">
    <citation type="journal article" date="2013" name="Stand. Genomic Sci.">
        <title>Complete genome sequence of Arthrobacter sp. strain FB24.</title>
        <authorList>
            <person name="Nakatsu C.H."/>
            <person name="Barabote R."/>
            <person name="Thompson S."/>
            <person name="Bruce D."/>
            <person name="Detter C."/>
            <person name="Brettin T."/>
            <person name="Han C."/>
            <person name="Beasley F."/>
            <person name="Chen W."/>
            <person name="Konopka A."/>
            <person name="Xie G."/>
        </authorList>
    </citation>
    <scope>NUCLEOTIDE SEQUENCE [LARGE SCALE GENOMIC DNA]</scope>
    <source>
        <strain>FB24</strain>
    </source>
</reference>
<keyword id="KW-0414">Isoprene biosynthesis</keyword>
<keyword id="KW-0464">Manganese</keyword>
<keyword id="KW-0479">Metal-binding</keyword>
<keyword id="KW-0521">NADP</keyword>
<keyword id="KW-0560">Oxidoreductase</keyword>
<keyword id="KW-1185">Reference proteome</keyword>